<comment type="function">
    <text evidence="1">Catalyzes the reversible transfer of the terminal phosphate group between ATP and AMP. Plays an important role in cellular energy homeostasis and in adenine nucleotide metabolism.</text>
</comment>
<comment type="catalytic activity">
    <reaction evidence="1">
        <text>AMP + ATP = 2 ADP</text>
        <dbReference type="Rhea" id="RHEA:12973"/>
        <dbReference type="ChEBI" id="CHEBI:30616"/>
        <dbReference type="ChEBI" id="CHEBI:456215"/>
        <dbReference type="ChEBI" id="CHEBI:456216"/>
        <dbReference type="EC" id="2.7.4.3"/>
    </reaction>
</comment>
<comment type="pathway">
    <text evidence="1">Purine metabolism; AMP biosynthesis via salvage pathway; AMP from ADP: step 1/1.</text>
</comment>
<comment type="subunit">
    <text evidence="1">Monomer.</text>
</comment>
<comment type="subcellular location">
    <subcellularLocation>
        <location evidence="1">Cytoplasm</location>
    </subcellularLocation>
</comment>
<comment type="domain">
    <text evidence="1">Consists of three domains, a large central CORE domain and two small peripheral domains, NMPbind and LID, which undergo movements during catalysis. The LID domain closes over the site of phosphoryl transfer upon ATP binding. Assembling and dissambling the active center during each catalytic cycle provides an effective means to prevent ATP hydrolysis. Some bacteria have evolved a zinc-coordinating structure that stabilizes the LID domain.</text>
</comment>
<comment type="similarity">
    <text evidence="1">Belongs to the adenylate kinase family.</text>
</comment>
<dbReference type="EC" id="2.7.4.3" evidence="1"/>
<dbReference type="EMBL" id="CP001393">
    <property type="protein sequence ID" value="ACM60819.1"/>
    <property type="molecule type" value="Genomic_DNA"/>
</dbReference>
<dbReference type="RefSeq" id="WP_013429981.1">
    <property type="nucleotide sequence ID" value="NC_012034.1"/>
</dbReference>
<dbReference type="SMR" id="B9MKG1"/>
<dbReference type="STRING" id="521460.Athe_1725"/>
<dbReference type="GeneID" id="31773082"/>
<dbReference type="KEGG" id="ate:Athe_1725"/>
<dbReference type="eggNOG" id="COG0563">
    <property type="taxonomic scope" value="Bacteria"/>
</dbReference>
<dbReference type="HOGENOM" id="CLU_032354_1_2_9"/>
<dbReference type="UniPathway" id="UPA00588">
    <property type="reaction ID" value="UER00649"/>
</dbReference>
<dbReference type="Proteomes" id="UP000007723">
    <property type="component" value="Chromosome"/>
</dbReference>
<dbReference type="GO" id="GO:0005737">
    <property type="term" value="C:cytoplasm"/>
    <property type="evidence" value="ECO:0007669"/>
    <property type="project" value="UniProtKB-SubCell"/>
</dbReference>
<dbReference type="GO" id="GO:0004017">
    <property type="term" value="F:adenylate kinase activity"/>
    <property type="evidence" value="ECO:0007669"/>
    <property type="project" value="UniProtKB-UniRule"/>
</dbReference>
<dbReference type="GO" id="GO:0005524">
    <property type="term" value="F:ATP binding"/>
    <property type="evidence" value="ECO:0007669"/>
    <property type="project" value="UniProtKB-UniRule"/>
</dbReference>
<dbReference type="GO" id="GO:0008270">
    <property type="term" value="F:zinc ion binding"/>
    <property type="evidence" value="ECO:0007669"/>
    <property type="project" value="UniProtKB-UniRule"/>
</dbReference>
<dbReference type="GO" id="GO:0044209">
    <property type="term" value="P:AMP salvage"/>
    <property type="evidence" value="ECO:0007669"/>
    <property type="project" value="UniProtKB-UniRule"/>
</dbReference>
<dbReference type="CDD" id="cd01428">
    <property type="entry name" value="ADK"/>
    <property type="match status" value="1"/>
</dbReference>
<dbReference type="FunFam" id="3.40.50.300:FF:000106">
    <property type="entry name" value="Adenylate kinase mitochondrial"/>
    <property type="match status" value="1"/>
</dbReference>
<dbReference type="Gene3D" id="3.40.50.300">
    <property type="entry name" value="P-loop containing nucleotide triphosphate hydrolases"/>
    <property type="match status" value="1"/>
</dbReference>
<dbReference type="HAMAP" id="MF_00235">
    <property type="entry name" value="Adenylate_kinase_Adk"/>
    <property type="match status" value="1"/>
</dbReference>
<dbReference type="InterPro" id="IPR006259">
    <property type="entry name" value="Adenyl_kin_sub"/>
</dbReference>
<dbReference type="InterPro" id="IPR000850">
    <property type="entry name" value="Adenylat/UMP-CMP_kin"/>
</dbReference>
<dbReference type="InterPro" id="IPR033690">
    <property type="entry name" value="Adenylat_kinase_CS"/>
</dbReference>
<dbReference type="InterPro" id="IPR007862">
    <property type="entry name" value="Adenylate_kinase_lid-dom"/>
</dbReference>
<dbReference type="InterPro" id="IPR027417">
    <property type="entry name" value="P-loop_NTPase"/>
</dbReference>
<dbReference type="NCBIfam" id="TIGR01351">
    <property type="entry name" value="adk"/>
    <property type="match status" value="1"/>
</dbReference>
<dbReference type="NCBIfam" id="NF001379">
    <property type="entry name" value="PRK00279.1-1"/>
    <property type="match status" value="1"/>
</dbReference>
<dbReference type="NCBIfam" id="NF001380">
    <property type="entry name" value="PRK00279.1-2"/>
    <property type="match status" value="1"/>
</dbReference>
<dbReference type="NCBIfam" id="NF001381">
    <property type="entry name" value="PRK00279.1-3"/>
    <property type="match status" value="1"/>
</dbReference>
<dbReference type="NCBIfam" id="NF011100">
    <property type="entry name" value="PRK14527.1"/>
    <property type="match status" value="1"/>
</dbReference>
<dbReference type="PANTHER" id="PTHR23359">
    <property type="entry name" value="NUCLEOTIDE KINASE"/>
    <property type="match status" value="1"/>
</dbReference>
<dbReference type="Pfam" id="PF00406">
    <property type="entry name" value="ADK"/>
    <property type="match status" value="1"/>
</dbReference>
<dbReference type="Pfam" id="PF05191">
    <property type="entry name" value="ADK_lid"/>
    <property type="match status" value="1"/>
</dbReference>
<dbReference type="PRINTS" id="PR00094">
    <property type="entry name" value="ADENYLTKNASE"/>
</dbReference>
<dbReference type="SUPFAM" id="SSF52540">
    <property type="entry name" value="P-loop containing nucleoside triphosphate hydrolases"/>
    <property type="match status" value="1"/>
</dbReference>
<dbReference type="PROSITE" id="PS00113">
    <property type="entry name" value="ADENYLATE_KINASE"/>
    <property type="match status" value="1"/>
</dbReference>
<feature type="chain" id="PRO_1000191118" description="Adenylate kinase">
    <location>
        <begin position="1"/>
        <end position="215"/>
    </location>
</feature>
<feature type="region of interest" description="NMP" evidence="1">
    <location>
        <begin position="30"/>
        <end position="59"/>
    </location>
</feature>
<feature type="region of interest" description="LID" evidence="1">
    <location>
        <begin position="126"/>
        <end position="163"/>
    </location>
</feature>
<feature type="binding site" evidence="1">
    <location>
        <begin position="10"/>
        <end position="15"/>
    </location>
    <ligand>
        <name>ATP</name>
        <dbReference type="ChEBI" id="CHEBI:30616"/>
    </ligand>
</feature>
<feature type="binding site" evidence="1">
    <location>
        <position position="31"/>
    </location>
    <ligand>
        <name>AMP</name>
        <dbReference type="ChEBI" id="CHEBI:456215"/>
    </ligand>
</feature>
<feature type="binding site" evidence="1">
    <location>
        <position position="36"/>
    </location>
    <ligand>
        <name>AMP</name>
        <dbReference type="ChEBI" id="CHEBI:456215"/>
    </ligand>
</feature>
<feature type="binding site" evidence="1">
    <location>
        <begin position="57"/>
        <end position="59"/>
    </location>
    <ligand>
        <name>AMP</name>
        <dbReference type="ChEBI" id="CHEBI:456215"/>
    </ligand>
</feature>
<feature type="binding site" evidence="1">
    <location>
        <begin position="85"/>
        <end position="88"/>
    </location>
    <ligand>
        <name>AMP</name>
        <dbReference type="ChEBI" id="CHEBI:456215"/>
    </ligand>
</feature>
<feature type="binding site" evidence="1">
    <location>
        <position position="92"/>
    </location>
    <ligand>
        <name>AMP</name>
        <dbReference type="ChEBI" id="CHEBI:456215"/>
    </ligand>
</feature>
<feature type="binding site" evidence="1">
    <location>
        <position position="127"/>
    </location>
    <ligand>
        <name>ATP</name>
        <dbReference type="ChEBI" id="CHEBI:30616"/>
    </ligand>
</feature>
<feature type="binding site" evidence="1">
    <location>
        <position position="130"/>
    </location>
    <ligand>
        <name>Zn(2+)</name>
        <dbReference type="ChEBI" id="CHEBI:29105"/>
        <note>structural</note>
    </ligand>
</feature>
<feature type="binding site" evidence="1">
    <location>
        <position position="133"/>
    </location>
    <ligand>
        <name>Zn(2+)</name>
        <dbReference type="ChEBI" id="CHEBI:29105"/>
        <note>structural</note>
    </ligand>
</feature>
<feature type="binding site" evidence="1">
    <location>
        <begin position="136"/>
        <end position="137"/>
    </location>
    <ligand>
        <name>ATP</name>
        <dbReference type="ChEBI" id="CHEBI:30616"/>
    </ligand>
</feature>
<feature type="binding site" evidence="1">
    <location>
        <position position="150"/>
    </location>
    <ligand>
        <name>Zn(2+)</name>
        <dbReference type="ChEBI" id="CHEBI:29105"/>
        <note>structural</note>
    </ligand>
</feature>
<feature type="binding site" evidence="1">
    <location>
        <position position="153"/>
    </location>
    <ligand>
        <name>Zn(2+)</name>
        <dbReference type="ChEBI" id="CHEBI:29105"/>
        <note>structural</note>
    </ligand>
</feature>
<feature type="binding site" evidence="1">
    <location>
        <position position="160"/>
    </location>
    <ligand>
        <name>AMP</name>
        <dbReference type="ChEBI" id="CHEBI:456215"/>
    </ligand>
</feature>
<feature type="binding site" evidence="1">
    <location>
        <position position="171"/>
    </location>
    <ligand>
        <name>AMP</name>
        <dbReference type="ChEBI" id="CHEBI:456215"/>
    </ligand>
</feature>
<feature type="binding site" evidence="1">
    <location>
        <position position="198"/>
    </location>
    <ligand>
        <name>ATP</name>
        <dbReference type="ChEBI" id="CHEBI:30616"/>
    </ligand>
</feature>
<gene>
    <name evidence="1" type="primary">adk</name>
    <name type="ordered locus">Athe_1725</name>
</gene>
<protein>
    <recommendedName>
        <fullName evidence="1">Adenylate kinase</fullName>
        <shortName evidence="1">AK</shortName>
        <ecNumber evidence="1">2.7.4.3</ecNumber>
    </recommendedName>
    <alternativeName>
        <fullName evidence="1">ATP-AMP transphosphorylase</fullName>
    </alternativeName>
    <alternativeName>
        <fullName evidence="1">ATP:AMP phosphotransferase</fullName>
    </alternativeName>
    <alternativeName>
        <fullName evidence="1">Adenylate monophosphate kinase</fullName>
    </alternativeName>
</protein>
<evidence type="ECO:0000255" key="1">
    <source>
        <dbReference type="HAMAP-Rule" id="MF_00235"/>
    </source>
</evidence>
<accession>B9MKG1</accession>
<sequence>MRLILLGAPGAGKGTQAEYLSKRFSIPHISTGDILRENVKNETELGKKAKEYMDKGLLVPDEIVIEIVKDRLSKEDCKNGFLLDGFPRTIAQAEALDKVLEELGQKIDKVLNIEVPDEKILERMSGRRICKNCGASFHVIYRPPQKEGVCDVCGGELYQREDDKEETVKKRLEVYHAQTQPLIDYYKAKGLLVVAYGQEEIADTTKEVLKALGIE</sequence>
<name>KAD_CALBD</name>
<keyword id="KW-0067">ATP-binding</keyword>
<keyword id="KW-0963">Cytoplasm</keyword>
<keyword id="KW-0418">Kinase</keyword>
<keyword id="KW-0479">Metal-binding</keyword>
<keyword id="KW-0545">Nucleotide biosynthesis</keyword>
<keyword id="KW-0547">Nucleotide-binding</keyword>
<keyword id="KW-0808">Transferase</keyword>
<keyword id="KW-0862">Zinc</keyword>
<reference key="1">
    <citation type="submission" date="2009-01" db="EMBL/GenBank/DDBJ databases">
        <title>Complete sequence of chromosome of Caldicellulosiruptor becscii DSM 6725.</title>
        <authorList>
            <person name="Lucas S."/>
            <person name="Copeland A."/>
            <person name="Lapidus A."/>
            <person name="Glavina del Rio T."/>
            <person name="Tice H."/>
            <person name="Bruce D."/>
            <person name="Goodwin L."/>
            <person name="Pitluck S."/>
            <person name="Sims D."/>
            <person name="Meincke L."/>
            <person name="Brettin T."/>
            <person name="Detter J.C."/>
            <person name="Han C."/>
            <person name="Larimer F."/>
            <person name="Land M."/>
            <person name="Hauser L."/>
            <person name="Kyrpides N."/>
            <person name="Ovchinnikova G."/>
            <person name="Kataeva I."/>
            <person name="Adams M.W.W."/>
        </authorList>
    </citation>
    <scope>NUCLEOTIDE SEQUENCE [LARGE SCALE GENOMIC DNA]</scope>
    <source>
        <strain>ATCC BAA-1888 / DSM 6725 / KCTC 15123 / Z-1320</strain>
    </source>
</reference>
<organism>
    <name type="scientific">Caldicellulosiruptor bescii (strain ATCC BAA-1888 / DSM 6725 / KCTC 15123 / Z-1320)</name>
    <name type="common">Anaerocellum thermophilum</name>
    <dbReference type="NCBI Taxonomy" id="521460"/>
    <lineage>
        <taxon>Bacteria</taxon>
        <taxon>Bacillati</taxon>
        <taxon>Bacillota</taxon>
        <taxon>Bacillota incertae sedis</taxon>
        <taxon>Caldicellulosiruptorales</taxon>
        <taxon>Caldicellulosiruptoraceae</taxon>
        <taxon>Caldicellulosiruptor</taxon>
    </lineage>
</organism>
<proteinExistence type="inferred from homology"/>